<comment type="function">
    <text evidence="1">Provides the (R)-glutamate required for cell wall biosynthesis.</text>
</comment>
<comment type="catalytic activity">
    <reaction evidence="1">
        <text>L-glutamate = D-glutamate</text>
        <dbReference type="Rhea" id="RHEA:12813"/>
        <dbReference type="ChEBI" id="CHEBI:29985"/>
        <dbReference type="ChEBI" id="CHEBI:29986"/>
        <dbReference type="EC" id="5.1.1.3"/>
    </reaction>
</comment>
<comment type="pathway">
    <text evidence="1">Cell wall biogenesis; peptidoglycan biosynthesis.</text>
</comment>
<comment type="similarity">
    <text evidence="1">Belongs to the aspartate/glutamate racemases family.</text>
</comment>
<dbReference type="EC" id="5.1.1.3" evidence="1"/>
<dbReference type="EMBL" id="CP001230">
    <property type="protein sequence ID" value="ACO04736.1"/>
    <property type="molecule type" value="Genomic_DNA"/>
</dbReference>
<dbReference type="RefSeq" id="WP_012676972.1">
    <property type="nucleotide sequence ID" value="NC_012440.1"/>
</dbReference>
<dbReference type="SMR" id="C0QQ35"/>
<dbReference type="STRING" id="123214.PERMA_0995"/>
<dbReference type="PaxDb" id="123214-PERMA_0995"/>
<dbReference type="KEGG" id="pmx:PERMA_0995"/>
<dbReference type="eggNOG" id="COG0796">
    <property type="taxonomic scope" value="Bacteria"/>
</dbReference>
<dbReference type="HOGENOM" id="CLU_052344_0_2_0"/>
<dbReference type="OrthoDB" id="9801055at2"/>
<dbReference type="UniPathway" id="UPA00219"/>
<dbReference type="Proteomes" id="UP000001366">
    <property type="component" value="Chromosome"/>
</dbReference>
<dbReference type="GO" id="GO:0008881">
    <property type="term" value="F:glutamate racemase activity"/>
    <property type="evidence" value="ECO:0007669"/>
    <property type="project" value="UniProtKB-UniRule"/>
</dbReference>
<dbReference type="GO" id="GO:0071555">
    <property type="term" value="P:cell wall organization"/>
    <property type="evidence" value="ECO:0007669"/>
    <property type="project" value="UniProtKB-KW"/>
</dbReference>
<dbReference type="GO" id="GO:0009252">
    <property type="term" value="P:peptidoglycan biosynthetic process"/>
    <property type="evidence" value="ECO:0007669"/>
    <property type="project" value="UniProtKB-UniRule"/>
</dbReference>
<dbReference type="GO" id="GO:0008360">
    <property type="term" value="P:regulation of cell shape"/>
    <property type="evidence" value="ECO:0007669"/>
    <property type="project" value="UniProtKB-KW"/>
</dbReference>
<dbReference type="FunFam" id="3.40.50.1860:FF:000002">
    <property type="entry name" value="Glutamate racemase"/>
    <property type="match status" value="1"/>
</dbReference>
<dbReference type="Gene3D" id="3.40.50.1860">
    <property type="match status" value="2"/>
</dbReference>
<dbReference type="HAMAP" id="MF_00258">
    <property type="entry name" value="Glu_racemase"/>
    <property type="match status" value="1"/>
</dbReference>
<dbReference type="InterPro" id="IPR015942">
    <property type="entry name" value="Asp/Glu/hydantoin_racemase"/>
</dbReference>
<dbReference type="InterPro" id="IPR001920">
    <property type="entry name" value="Asp/Glu_race"/>
</dbReference>
<dbReference type="InterPro" id="IPR018187">
    <property type="entry name" value="Asp/Glu_racemase_AS_1"/>
</dbReference>
<dbReference type="InterPro" id="IPR033134">
    <property type="entry name" value="Asp/Glu_racemase_AS_2"/>
</dbReference>
<dbReference type="InterPro" id="IPR004391">
    <property type="entry name" value="Glu_race"/>
</dbReference>
<dbReference type="NCBIfam" id="TIGR00067">
    <property type="entry name" value="glut_race"/>
    <property type="match status" value="1"/>
</dbReference>
<dbReference type="PANTHER" id="PTHR21198">
    <property type="entry name" value="GLUTAMATE RACEMASE"/>
    <property type="match status" value="1"/>
</dbReference>
<dbReference type="PANTHER" id="PTHR21198:SF2">
    <property type="entry name" value="GLUTAMATE RACEMASE"/>
    <property type="match status" value="1"/>
</dbReference>
<dbReference type="Pfam" id="PF01177">
    <property type="entry name" value="Asp_Glu_race"/>
    <property type="match status" value="1"/>
</dbReference>
<dbReference type="SUPFAM" id="SSF53681">
    <property type="entry name" value="Aspartate/glutamate racemase"/>
    <property type="match status" value="2"/>
</dbReference>
<dbReference type="PROSITE" id="PS00923">
    <property type="entry name" value="ASP_GLU_RACEMASE_1"/>
    <property type="match status" value="1"/>
</dbReference>
<dbReference type="PROSITE" id="PS00924">
    <property type="entry name" value="ASP_GLU_RACEMASE_2"/>
    <property type="match status" value="1"/>
</dbReference>
<gene>
    <name evidence="1" type="primary">murI</name>
    <name type="ordered locus">PERMA_0995</name>
</gene>
<name>MURI_PERMH</name>
<protein>
    <recommendedName>
        <fullName evidence="1">Glutamate racemase</fullName>
        <ecNumber evidence="1">5.1.1.3</ecNumber>
    </recommendedName>
</protein>
<reference key="1">
    <citation type="journal article" date="2009" name="J. Bacteriol.">
        <title>Complete and draft genome sequences of six members of the Aquificales.</title>
        <authorList>
            <person name="Reysenbach A.-L."/>
            <person name="Hamamura N."/>
            <person name="Podar M."/>
            <person name="Griffiths E."/>
            <person name="Ferreira S."/>
            <person name="Hochstein R."/>
            <person name="Heidelberg J."/>
            <person name="Johnson J."/>
            <person name="Mead D."/>
            <person name="Pohorille A."/>
            <person name="Sarmiento M."/>
            <person name="Schweighofer K."/>
            <person name="Seshadri R."/>
            <person name="Voytek M.A."/>
        </authorList>
    </citation>
    <scope>NUCLEOTIDE SEQUENCE [LARGE SCALE GENOMIC DNA]</scope>
    <source>
        <strain>DSM 14350 / EX-H1</strain>
    </source>
</reference>
<proteinExistence type="inferred from homology"/>
<keyword id="KW-0133">Cell shape</keyword>
<keyword id="KW-0961">Cell wall biogenesis/degradation</keyword>
<keyword id="KW-0413">Isomerase</keyword>
<keyword id="KW-0573">Peptidoglycan synthesis</keyword>
<keyword id="KW-1185">Reference proteome</keyword>
<sequence length="259" mass="28755">MSIGIFDSGVGGLTVFREIDREFPFADIYYLGDTARVPYGNKSKETIIRYSLECANYLYSFGIDALIVACNTASSYAIEALRESFDIPVIGVIKPGVELAVKTTKNGRIGVIGTQATIKSGSYRTEIEKKGDFTVYQKPCPLFVPLVEEGLIDHKITELTVKEYLDDIVSKGIDTLILGCTHYPLLKDVIKKIYPHLNIIDSSKATALYLKKKNLDLNGTGERKIFITDESPSFEKLKDLVVGSDIHLEKLELSKICTL</sequence>
<evidence type="ECO:0000255" key="1">
    <source>
        <dbReference type="HAMAP-Rule" id="MF_00258"/>
    </source>
</evidence>
<feature type="chain" id="PRO_1000125615" description="Glutamate racemase">
    <location>
        <begin position="1"/>
        <end position="259"/>
    </location>
</feature>
<feature type="active site" description="Proton donor/acceptor" evidence="1">
    <location>
        <position position="70"/>
    </location>
</feature>
<feature type="active site" description="Proton donor/acceptor" evidence="1">
    <location>
        <position position="180"/>
    </location>
</feature>
<feature type="binding site" evidence="1">
    <location>
        <begin position="7"/>
        <end position="8"/>
    </location>
    <ligand>
        <name>substrate</name>
    </ligand>
</feature>
<feature type="binding site" evidence="1">
    <location>
        <begin position="39"/>
        <end position="40"/>
    </location>
    <ligand>
        <name>substrate</name>
    </ligand>
</feature>
<feature type="binding site" evidence="1">
    <location>
        <begin position="71"/>
        <end position="72"/>
    </location>
    <ligand>
        <name>substrate</name>
    </ligand>
</feature>
<feature type="binding site" evidence="1">
    <location>
        <begin position="181"/>
        <end position="182"/>
    </location>
    <ligand>
        <name>substrate</name>
    </ligand>
</feature>
<accession>C0QQ35</accession>
<organism>
    <name type="scientific">Persephonella marina (strain DSM 14350 / EX-H1)</name>
    <dbReference type="NCBI Taxonomy" id="123214"/>
    <lineage>
        <taxon>Bacteria</taxon>
        <taxon>Pseudomonadati</taxon>
        <taxon>Aquificota</taxon>
        <taxon>Aquificia</taxon>
        <taxon>Aquificales</taxon>
        <taxon>Hydrogenothermaceae</taxon>
        <taxon>Persephonella</taxon>
    </lineage>
</organism>